<organism>
    <name type="scientific">Aster yellows witches'-broom phytoplasma (strain AYWB)</name>
    <dbReference type="NCBI Taxonomy" id="322098"/>
    <lineage>
        <taxon>Bacteria</taxon>
        <taxon>Bacillati</taxon>
        <taxon>Mycoplasmatota</taxon>
        <taxon>Mollicutes</taxon>
        <taxon>Acholeplasmatales</taxon>
        <taxon>Acholeplasmataceae</taxon>
        <taxon>Candidatus Phytoplasma</taxon>
        <taxon>16SrI (Aster yellows group)</taxon>
    </lineage>
</organism>
<dbReference type="EC" id="2.7.7.6" evidence="1"/>
<dbReference type="EMBL" id="CP000061">
    <property type="protein sequence ID" value="ABC65577.1"/>
    <property type="molecule type" value="Genomic_DNA"/>
</dbReference>
<dbReference type="RefSeq" id="WP_011412741.1">
    <property type="nucleotide sequence ID" value="NC_007716.1"/>
</dbReference>
<dbReference type="SMR" id="Q2NJ16"/>
<dbReference type="STRING" id="322098.AYWB_460"/>
<dbReference type="KEGG" id="ayw:AYWB_460"/>
<dbReference type="eggNOG" id="COG0086">
    <property type="taxonomic scope" value="Bacteria"/>
</dbReference>
<dbReference type="HOGENOM" id="CLU_000524_3_1_14"/>
<dbReference type="OrthoDB" id="9815296at2"/>
<dbReference type="PhylomeDB" id="Q2NJ16"/>
<dbReference type="Proteomes" id="UP000001934">
    <property type="component" value="Chromosome"/>
</dbReference>
<dbReference type="GO" id="GO:0000428">
    <property type="term" value="C:DNA-directed RNA polymerase complex"/>
    <property type="evidence" value="ECO:0007669"/>
    <property type="project" value="UniProtKB-KW"/>
</dbReference>
<dbReference type="GO" id="GO:0003677">
    <property type="term" value="F:DNA binding"/>
    <property type="evidence" value="ECO:0007669"/>
    <property type="project" value="UniProtKB-UniRule"/>
</dbReference>
<dbReference type="GO" id="GO:0003899">
    <property type="term" value="F:DNA-directed RNA polymerase activity"/>
    <property type="evidence" value="ECO:0007669"/>
    <property type="project" value="UniProtKB-UniRule"/>
</dbReference>
<dbReference type="GO" id="GO:0000287">
    <property type="term" value="F:magnesium ion binding"/>
    <property type="evidence" value="ECO:0007669"/>
    <property type="project" value="UniProtKB-UniRule"/>
</dbReference>
<dbReference type="GO" id="GO:0008270">
    <property type="term" value="F:zinc ion binding"/>
    <property type="evidence" value="ECO:0007669"/>
    <property type="project" value="UniProtKB-UniRule"/>
</dbReference>
<dbReference type="GO" id="GO:0006351">
    <property type="term" value="P:DNA-templated transcription"/>
    <property type="evidence" value="ECO:0007669"/>
    <property type="project" value="UniProtKB-UniRule"/>
</dbReference>
<dbReference type="CDD" id="cd02655">
    <property type="entry name" value="RNAP_beta'_C"/>
    <property type="match status" value="1"/>
</dbReference>
<dbReference type="CDD" id="cd01609">
    <property type="entry name" value="RNAP_beta'_N"/>
    <property type="match status" value="1"/>
</dbReference>
<dbReference type="Gene3D" id="1.10.132.30">
    <property type="match status" value="1"/>
</dbReference>
<dbReference type="Gene3D" id="1.10.150.390">
    <property type="match status" value="1"/>
</dbReference>
<dbReference type="Gene3D" id="1.10.1790.20">
    <property type="match status" value="1"/>
</dbReference>
<dbReference type="Gene3D" id="1.10.40.90">
    <property type="match status" value="1"/>
</dbReference>
<dbReference type="Gene3D" id="2.40.40.20">
    <property type="match status" value="1"/>
</dbReference>
<dbReference type="Gene3D" id="2.40.50.100">
    <property type="match status" value="1"/>
</dbReference>
<dbReference type="Gene3D" id="4.10.860.120">
    <property type="entry name" value="RNA polymerase II, clamp domain"/>
    <property type="match status" value="1"/>
</dbReference>
<dbReference type="Gene3D" id="1.10.274.100">
    <property type="entry name" value="RNA polymerase Rpb1, domain 3"/>
    <property type="match status" value="1"/>
</dbReference>
<dbReference type="HAMAP" id="MF_01322">
    <property type="entry name" value="RNApol_bact_RpoC"/>
    <property type="match status" value="1"/>
</dbReference>
<dbReference type="InterPro" id="IPR045867">
    <property type="entry name" value="DNA-dir_RpoC_beta_prime"/>
</dbReference>
<dbReference type="InterPro" id="IPR012754">
    <property type="entry name" value="DNA-dir_RpoC_beta_prime_bact"/>
</dbReference>
<dbReference type="InterPro" id="IPR000722">
    <property type="entry name" value="RNA_pol_asu"/>
</dbReference>
<dbReference type="InterPro" id="IPR006592">
    <property type="entry name" value="RNA_pol_N"/>
</dbReference>
<dbReference type="InterPro" id="IPR007080">
    <property type="entry name" value="RNA_pol_Rpb1_1"/>
</dbReference>
<dbReference type="InterPro" id="IPR007066">
    <property type="entry name" value="RNA_pol_Rpb1_3"/>
</dbReference>
<dbReference type="InterPro" id="IPR042102">
    <property type="entry name" value="RNA_pol_Rpb1_3_sf"/>
</dbReference>
<dbReference type="InterPro" id="IPR007083">
    <property type="entry name" value="RNA_pol_Rpb1_4"/>
</dbReference>
<dbReference type="InterPro" id="IPR007081">
    <property type="entry name" value="RNA_pol_Rpb1_5"/>
</dbReference>
<dbReference type="InterPro" id="IPR044893">
    <property type="entry name" value="RNA_pol_Rpb1_clamp_domain"/>
</dbReference>
<dbReference type="InterPro" id="IPR038120">
    <property type="entry name" value="Rpb1_funnel_sf"/>
</dbReference>
<dbReference type="NCBIfam" id="TIGR02386">
    <property type="entry name" value="rpoC_TIGR"/>
    <property type="match status" value="1"/>
</dbReference>
<dbReference type="PANTHER" id="PTHR19376">
    <property type="entry name" value="DNA-DIRECTED RNA POLYMERASE"/>
    <property type="match status" value="1"/>
</dbReference>
<dbReference type="PANTHER" id="PTHR19376:SF54">
    <property type="entry name" value="DNA-DIRECTED RNA POLYMERASE SUBUNIT BETA"/>
    <property type="match status" value="1"/>
</dbReference>
<dbReference type="Pfam" id="PF04997">
    <property type="entry name" value="RNA_pol_Rpb1_1"/>
    <property type="match status" value="1"/>
</dbReference>
<dbReference type="Pfam" id="PF00623">
    <property type="entry name" value="RNA_pol_Rpb1_2"/>
    <property type="match status" value="2"/>
</dbReference>
<dbReference type="Pfam" id="PF04983">
    <property type="entry name" value="RNA_pol_Rpb1_3"/>
    <property type="match status" value="1"/>
</dbReference>
<dbReference type="Pfam" id="PF05000">
    <property type="entry name" value="RNA_pol_Rpb1_4"/>
    <property type="match status" value="1"/>
</dbReference>
<dbReference type="Pfam" id="PF04998">
    <property type="entry name" value="RNA_pol_Rpb1_5"/>
    <property type="match status" value="1"/>
</dbReference>
<dbReference type="SMART" id="SM00663">
    <property type="entry name" value="RPOLA_N"/>
    <property type="match status" value="1"/>
</dbReference>
<dbReference type="SUPFAM" id="SSF64484">
    <property type="entry name" value="beta and beta-prime subunits of DNA dependent RNA-polymerase"/>
    <property type="match status" value="1"/>
</dbReference>
<protein>
    <recommendedName>
        <fullName evidence="1">DNA-directed RNA polymerase subunit beta'</fullName>
        <shortName evidence="1">RNAP subunit beta'</shortName>
        <ecNumber evidence="1">2.7.7.6</ecNumber>
    </recommendedName>
    <alternativeName>
        <fullName evidence="1">RNA polymerase subunit beta'</fullName>
    </alternativeName>
    <alternativeName>
        <fullName evidence="1">Transcriptase subunit beta'</fullName>
    </alternativeName>
</protein>
<name>RPOC_AYWBP</name>
<comment type="function">
    <text evidence="1">DNA-dependent RNA polymerase catalyzes the transcription of DNA into RNA using the four ribonucleoside triphosphates as substrates.</text>
</comment>
<comment type="catalytic activity">
    <reaction evidence="1">
        <text>RNA(n) + a ribonucleoside 5'-triphosphate = RNA(n+1) + diphosphate</text>
        <dbReference type="Rhea" id="RHEA:21248"/>
        <dbReference type="Rhea" id="RHEA-COMP:14527"/>
        <dbReference type="Rhea" id="RHEA-COMP:17342"/>
        <dbReference type="ChEBI" id="CHEBI:33019"/>
        <dbReference type="ChEBI" id="CHEBI:61557"/>
        <dbReference type="ChEBI" id="CHEBI:140395"/>
        <dbReference type="EC" id="2.7.7.6"/>
    </reaction>
</comment>
<comment type="cofactor">
    <cofactor evidence="1">
        <name>Mg(2+)</name>
        <dbReference type="ChEBI" id="CHEBI:18420"/>
    </cofactor>
    <text evidence="1">Binds 1 Mg(2+) ion per subunit.</text>
</comment>
<comment type="cofactor">
    <cofactor evidence="1">
        <name>Zn(2+)</name>
        <dbReference type="ChEBI" id="CHEBI:29105"/>
    </cofactor>
    <text evidence="2">Binds 1 Zn(2+) ion per subunit; 2 are expected compared to other organisms.</text>
</comment>
<comment type="subunit">
    <text evidence="1">The RNAP catalytic core consists of 2 alpha, 1 beta, 1 beta' and 1 omega subunit. When a sigma factor is associated with the core the holoenzyme is formed, which can initiate transcription.</text>
</comment>
<comment type="similarity">
    <text evidence="1 2">Belongs to the RNA polymerase beta' chain family.</text>
</comment>
<reference key="1">
    <citation type="journal article" date="2006" name="J. Bacteriol.">
        <title>Living with genome instability: the adaptation of phytoplasmas to diverse environments of their insect and plant hosts.</title>
        <authorList>
            <person name="Bai X."/>
            <person name="Zhang J."/>
            <person name="Ewing A."/>
            <person name="Miller S.A."/>
            <person name="Jancso Radek A."/>
            <person name="Shevchenko D.V."/>
            <person name="Tsukerman K."/>
            <person name="Walunas T."/>
            <person name="Lapidus A."/>
            <person name="Campbell J.W."/>
            <person name="Hogenhout S.A."/>
        </authorList>
    </citation>
    <scope>NUCLEOTIDE SEQUENCE [LARGE SCALE GENOMIC DNA]</scope>
    <source>
        <strain>AYWB</strain>
    </source>
</reference>
<keyword id="KW-0240">DNA-directed RNA polymerase</keyword>
<keyword id="KW-0460">Magnesium</keyword>
<keyword id="KW-0479">Metal-binding</keyword>
<keyword id="KW-0548">Nucleotidyltransferase</keyword>
<keyword id="KW-0804">Transcription</keyword>
<keyword id="KW-0808">Transferase</keyword>
<keyword id="KW-0862">Zinc</keyword>
<accession>Q2NJ16</accession>
<feature type="chain" id="PRO_0000240796" description="DNA-directed RNA polymerase subunit beta'">
    <location>
        <begin position="1"/>
        <end position="1353"/>
    </location>
</feature>
<feature type="region of interest" description="Unknown">
    <location>
        <begin position="1"/>
        <end position="117"/>
    </location>
</feature>
<feature type="region of interest" description="DNA-directed RNA polymerase subunit beta'">
    <location>
        <begin position="118"/>
        <end position="1353"/>
    </location>
</feature>
<feature type="binding site" evidence="1">
    <location>
        <position position="189"/>
    </location>
    <ligand>
        <name>Zn(2+)</name>
        <dbReference type="ChEBI" id="CHEBI:29105"/>
    </ligand>
</feature>
<feature type="binding site" evidence="1">
    <location>
        <position position="191"/>
    </location>
    <ligand>
        <name>Zn(2+)</name>
        <dbReference type="ChEBI" id="CHEBI:29105"/>
    </ligand>
</feature>
<feature type="binding site" evidence="1">
    <location>
        <position position="203"/>
    </location>
    <ligand>
        <name>Zn(2+)</name>
        <dbReference type="ChEBI" id="CHEBI:29105"/>
    </ligand>
</feature>
<feature type="binding site" evidence="1">
    <location>
        <position position="206"/>
    </location>
    <ligand>
        <name>Zn(2+)</name>
        <dbReference type="ChEBI" id="CHEBI:29105"/>
    </ligand>
</feature>
<feature type="binding site" evidence="1">
    <location>
        <position position="578"/>
    </location>
    <ligand>
        <name>Mg(2+)</name>
        <dbReference type="ChEBI" id="CHEBI:18420"/>
    </ligand>
</feature>
<feature type="binding site" evidence="1">
    <location>
        <position position="580"/>
    </location>
    <ligand>
        <name>Mg(2+)</name>
        <dbReference type="ChEBI" id="CHEBI:18420"/>
    </ligand>
</feature>
<feature type="binding site" evidence="1">
    <location>
        <position position="582"/>
    </location>
    <ligand>
        <name>Mg(2+)</name>
        <dbReference type="ChEBI" id="CHEBI:18420"/>
    </ligand>
</feature>
<sequence length="1353" mass="153982">MSDNRLFTSVETLNLSSPVLEKLKLSGINTLEDFNTFTLEELRLLLQEAFLEVLPILKNFALPRNLQNLDLSEAVINILTELGMEDFQDLLQTKMAVLTKSFETNPLAFQKLNDLFKLYNHFPSISSDKEYGSRDYDYFKIRLAAPEEIRQWSYGEVTSYETINYRTYKPEISGLFCQKIFGPVVDFQCACSKKQVSIKSQFCNKCGVEFTETKVRRERMGHIELQTPIVHTWYLNSSPSRLAILLNIKTKQLEEIVYYVSYVVIDPGKTEFKPKEIITETQYSEALYEFGNTFVALTGAEAVKKLLENLNLEKTIKVLRKSLSENSKQKRESIIKRLEIIESFHQSDNKPEWMVMDVIPVLPPGLRPMVPLDGGRFATTEVNDLYRRILNRNNRLKKQMLQKAPRLIIKNEKRMLQEAVDALFDNTKTSKKNVNNVEKNRPLKSLSEMLRGKQGRFRQNLLGKRVDYSGRSVIIVGPDLEMHQCGVPREMAIILFKPFILKKLQETKGIDKKNANTIYEKMNEEVWNALEEVVKEHPVLLNRAPTLHRLGIQAFDPKLIDGKAIRLHPLVTPAFNADFDGDQMAIYVPLSLEAQAEARLLMLVSNNILDPKNGNPVVTPSQDMVLGNYYLTIEEKKDRTINSYDSAQRTAEHQFKHRNEGTFFADINEAKTAYQNKEIHLHTRIFIKPQTINLSFTEEQRQKYLMTTLGKLIFNDILPPSFPYINEPTQFNLDVKTPDAYFLPPGTNPKQFLKKLPTPKPFNKKFLSMIIACFFKQMKITETSKMLDHIKNLGFKYSTIAGITVSFADINTYSNKQELLQEVETRNIQIETWHKDGFLTDAERRRLVINEWKTIRDEIQEGLMKEFKQDNHIFMMSESGARGSVSNFTQLAGMRGLMNNPKGEIIEVPVKASFREGLKVSEFFISTHGARKGSTDTALKTAESGYLTRRLVDVTQDIVVIKEDCNSDRGFIVEAMMSDGKEIVSLKKRIMGRFASCDICHPKTNTLIVARNELIIESKAQEIITAKIKKVPIRSILTCNCEYGICAKDYGVNLATNKLVEIGEAVGVIAAQSIGEPGTQLTMRTFHTGGVASASDITQGLPRIEELFEVRKPKGKALISELKGKIKKIDKIRSQNPEIVITEENDPDTEHRYILEPNVDILVSKNNIVYPGQKLTSGSVDLKELLRVAGTTEVQKYILEEVQKVYRAQNVYISDKHIEIIIHQMFKQILIIDEGDTHLLPGTEITINKFKKANLKMLEEKKRLAVGRPIILGITRSSLRSDSLLSAASFQETTKILIDAAIKGKTDHLYGLKENVIIGGLIPAGTGILETTLFKYPKEPATTSELTKKTNQN</sequence>
<gene>
    <name evidence="1" type="primary">rpoC</name>
    <name type="ordered locus">AYWB_460</name>
</gene>
<evidence type="ECO:0000255" key="1">
    <source>
        <dbReference type="HAMAP-Rule" id="MF_01322"/>
    </source>
</evidence>
<evidence type="ECO:0000305" key="2"/>
<proteinExistence type="inferred from homology"/>